<name>MRAZ_ECO8A</name>
<comment type="function">
    <text evidence="1">Negatively regulates its own expression and that of the subsequent genes in the proximal part of the division and cell wall (dcw) gene cluster. Acts by binding directly to DNA. May also regulate the expression of genes outside the dcw cluster.</text>
</comment>
<comment type="subunit">
    <text evidence="1">Forms oligomers.</text>
</comment>
<comment type="subcellular location">
    <subcellularLocation>
        <location evidence="1">Cytoplasm</location>
        <location evidence="1">Nucleoid</location>
    </subcellularLocation>
</comment>
<comment type="similarity">
    <text evidence="1">Belongs to the MraZ family.</text>
</comment>
<dbReference type="EMBL" id="CU928160">
    <property type="protein sequence ID" value="CAQ96970.1"/>
    <property type="molecule type" value="Genomic_DNA"/>
</dbReference>
<dbReference type="RefSeq" id="WP_001295770.1">
    <property type="nucleotide sequence ID" value="NC_011741.1"/>
</dbReference>
<dbReference type="SMR" id="B7M124"/>
<dbReference type="GeneID" id="75202102"/>
<dbReference type="KEGG" id="ecr:ECIAI1_0080"/>
<dbReference type="HOGENOM" id="CLU_107907_2_0_6"/>
<dbReference type="GO" id="GO:0005737">
    <property type="term" value="C:cytoplasm"/>
    <property type="evidence" value="ECO:0007669"/>
    <property type="project" value="UniProtKB-UniRule"/>
</dbReference>
<dbReference type="GO" id="GO:0009295">
    <property type="term" value="C:nucleoid"/>
    <property type="evidence" value="ECO:0007669"/>
    <property type="project" value="UniProtKB-SubCell"/>
</dbReference>
<dbReference type="GO" id="GO:0003700">
    <property type="term" value="F:DNA-binding transcription factor activity"/>
    <property type="evidence" value="ECO:0007669"/>
    <property type="project" value="UniProtKB-UniRule"/>
</dbReference>
<dbReference type="GO" id="GO:0000976">
    <property type="term" value="F:transcription cis-regulatory region binding"/>
    <property type="evidence" value="ECO:0007669"/>
    <property type="project" value="TreeGrafter"/>
</dbReference>
<dbReference type="GO" id="GO:2000143">
    <property type="term" value="P:negative regulation of DNA-templated transcription initiation"/>
    <property type="evidence" value="ECO:0007669"/>
    <property type="project" value="TreeGrafter"/>
</dbReference>
<dbReference type="CDD" id="cd16321">
    <property type="entry name" value="MraZ_C"/>
    <property type="match status" value="1"/>
</dbReference>
<dbReference type="CDD" id="cd16320">
    <property type="entry name" value="MraZ_N"/>
    <property type="match status" value="1"/>
</dbReference>
<dbReference type="FunFam" id="3.40.1550.20:FF:000001">
    <property type="entry name" value="Transcriptional regulator MraZ"/>
    <property type="match status" value="1"/>
</dbReference>
<dbReference type="Gene3D" id="3.40.1550.20">
    <property type="entry name" value="Transcriptional regulator MraZ domain"/>
    <property type="match status" value="1"/>
</dbReference>
<dbReference type="HAMAP" id="MF_01008">
    <property type="entry name" value="MraZ"/>
    <property type="match status" value="1"/>
</dbReference>
<dbReference type="InterPro" id="IPR003444">
    <property type="entry name" value="MraZ"/>
</dbReference>
<dbReference type="InterPro" id="IPR035644">
    <property type="entry name" value="MraZ_C"/>
</dbReference>
<dbReference type="InterPro" id="IPR020603">
    <property type="entry name" value="MraZ_dom"/>
</dbReference>
<dbReference type="InterPro" id="IPR035642">
    <property type="entry name" value="MraZ_N"/>
</dbReference>
<dbReference type="InterPro" id="IPR038619">
    <property type="entry name" value="MraZ_sf"/>
</dbReference>
<dbReference type="InterPro" id="IPR007159">
    <property type="entry name" value="SpoVT-AbrB_dom"/>
</dbReference>
<dbReference type="InterPro" id="IPR037914">
    <property type="entry name" value="SpoVT-AbrB_sf"/>
</dbReference>
<dbReference type="NCBIfam" id="TIGR00242">
    <property type="entry name" value="division/cell wall cluster transcriptional repressor MraZ"/>
    <property type="match status" value="1"/>
</dbReference>
<dbReference type="PANTHER" id="PTHR34701">
    <property type="entry name" value="TRANSCRIPTIONAL REGULATOR MRAZ"/>
    <property type="match status" value="1"/>
</dbReference>
<dbReference type="PANTHER" id="PTHR34701:SF1">
    <property type="entry name" value="TRANSCRIPTIONAL REGULATOR MRAZ"/>
    <property type="match status" value="1"/>
</dbReference>
<dbReference type="Pfam" id="PF02381">
    <property type="entry name" value="MraZ"/>
    <property type="match status" value="2"/>
</dbReference>
<dbReference type="SUPFAM" id="SSF89447">
    <property type="entry name" value="AbrB/MazE/MraZ-like"/>
    <property type="match status" value="1"/>
</dbReference>
<dbReference type="PROSITE" id="PS51740">
    <property type="entry name" value="SPOVT_ABRB"/>
    <property type="match status" value="2"/>
</dbReference>
<proteinExistence type="inferred from homology"/>
<sequence length="152" mass="17360">MFRGATLVNLDSKGRLSVPTRYREQLLENAAGQMVCTIDIHHPCLLLYPLPEWEIIEQKLSRLSSMNPVERRVQRLLLGHASECQMDGAGRLLIAPVLRQHAGLTKEVMLVGQFNKFELWDETTWHQQVKEDIDAEQLATGDLSERLQDLSL</sequence>
<accession>B7M124</accession>
<evidence type="ECO:0000255" key="1">
    <source>
        <dbReference type="HAMAP-Rule" id="MF_01008"/>
    </source>
</evidence>
<evidence type="ECO:0000255" key="2">
    <source>
        <dbReference type="PROSITE-ProRule" id="PRU01076"/>
    </source>
</evidence>
<keyword id="KW-0963">Cytoplasm</keyword>
<keyword id="KW-0238">DNA-binding</keyword>
<keyword id="KW-0677">Repeat</keyword>
<keyword id="KW-0678">Repressor</keyword>
<keyword id="KW-0804">Transcription</keyword>
<keyword id="KW-0805">Transcription regulation</keyword>
<gene>
    <name evidence="1" type="primary">mraZ</name>
    <name type="ordered locus">ECIAI1_0080</name>
</gene>
<reference key="1">
    <citation type="journal article" date="2009" name="PLoS Genet.">
        <title>Organised genome dynamics in the Escherichia coli species results in highly diverse adaptive paths.</title>
        <authorList>
            <person name="Touchon M."/>
            <person name="Hoede C."/>
            <person name="Tenaillon O."/>
            <person name="Barbe V."/>
            <person name="Baeriswyl S."/>
            <person name="Bidet P."/>
            <person name="Bingen E."/>
            <person name="Bonacorsi S."/>
            <person name="Bouchier C."/>
            <person name="Bouvet O."/>
            <person name="Calteau A."/>
            <person name="Chiapello H."/>
            <person name="Clermont O."/>
            <person name="Cruveiller S."/>
            <person name="Danchin A."/>
            <person name="Diard M."/>
            <person name="Dossat C."/>
            <person name="Karoui M.E."/>
            <person name="Frapy E."/>
            <person name="Garry L."/>
            <person name="Ghigo J.M."/>
            <person name="Gilles A.M."/>
            <person name="Johnson J."/>
            <person name="Le Bouguenec C."/>
            <person name="Lescat M."/>
            <person name="Mangenot S."/>
            <person name="Martinez-Jehanne V."/>
            <person name="Matic I."/>
            <person name="Nassif X."/>
            <person name="Oztas S."/>
            <person name="Petit M.A."/>
            <person name="Pichon C."/>
            <person name="Rouy Z."/>
            <person name="Ruf C.S."/>
            <person name="Schneider D."/>
            <person name="Tourret J."/>
            <person name="Vacherie B."/>
            <person name="Vallenet D."/>
            <person name="Medigue C."/>
            <person name="Rocha E.P.C."/>
            <person name="Denamur E."/>
        </authorList>
    </citation>
    <scope>NUCLEOTIDE SEQUENCE [LARGE SCALE GENOMIC DNA]</scope>
    <source>
        <strain>IAI1</strain>
    </source>
</reference>
<organism>
    <name type="scientific">Escherichia coli O8 (strain IAI1)</name>
    <dbReference type="NCBI Taxonomy" id="585034"/>
    <lineage>
        <taxon>Bacteria</taxon>
        <taxon>Pseudomonadati</taxon>
        <taxon>Pseudomonadota</taxon>
        <taxon>Gammaproteobacteria</taxon>
        <taxon>Enterobacterales</taxon>
        <taxon>Enterobacteriaceae</taxon>
        <taxon>Escherichia</taxon>
    </lineage>
</organism>
<protein>
    <recommendedName>
        <fullName>Transcriptional regulator MraZ</fullName>
    </recommendedName>
</protein>
<feature type="chain" id="PRO_1000134792" description="Transcriptional regulator MraZ">
    <location>
        <begin position="1"/>
        <end position="152"/>
    </location>
</feature>
<feature type="domain" description="SpoVT-AbrB 1" evidence="2">
    <location>
        <begin position="5"/>
        <end position="52"/>
    </location>
</feature>
<feature type="domain" description="SpoVT-AbrB 2" evidence="2">
    <location>
        <begin position="81"/>
        <end position="124"/>
    </location>
</feature>